<comment type="function">
    <text evidence="1">Releases the supercoiling and torsional tension of DNA, which is introduced during the DNA replication and transcription, by transiently cleaving and rejoining one strand of the DNA duplex. Introduces a single-strand break via transesterification at a target site in duplex DNA. The scissile phosphodiester is attacked by the catalytic tyrosine of the enzyme, resulting in the formation of a DNA-(5'-phosphotyrosyl)-enzyme intermediate and the expulsion of a 3'-OH DNA strand. The free DNA strand then undergoes passage around the unbroken strand, thus removing DNA supercoils. Finally, in the religation step, the DNA 3'-OH attacks the covalent intermediate to expel the active-site tyrosine and restore the DNA phosphodiester backbone.</text>
</comment>
<comment type="catalytic activity">
    <reaction evidence="1">
        <text>ATP-independent breakage of single-stranded DNA, followed by passage and rejoining.</text>
        <dbReference type="EC" id="5.6.2.1"/>
    </reaction>
</comment>
<comment type="cofactor">
    <cofactor evidence="1">
        <name>Mg(2+)</name>
        <dbReference type="ChEBI" id="CHEBI:18420"/>
    </cofactor>
</comment>
<comment type="subunit">
    <text evidence="1">Monomer.</text>
</comment>
<comment type="similarity">
    <text evidence="1">Belongs to the type IA topoisomerase family.</text>
</comment>
<dbReference type="EC" id="5.6.2.1" evidence="1"/>
<dbReference type="EMBL" id="DQ923160">
    <property type="protein sequence ID" value="ABI81408.1"/>
    <property type="molecule type" value="Genomic_DNA"/>
</dbReference>
<dbReference type="SMR" id="Q06AK7"/>
<dbReference type="DrugBank" id="DB01051">
    <property type="generic name" value="Novobiocin"/>
</dbReference>
<dbReference type="DrugBank" id="DB00487">
    <property type="generic name" value="Pefloxacin"/>
</dbReference>
<dbReference type="BRENDA" id="5.6.2.1">
    <property type="organism ID" value="3352"/>
</dbReference>
<dbReference type="GO" id="GO:0005694">
    <property type="term" value="C:chromosome"/>
    <property type="evidence" value="ECO:0007669"/>
    <property type="project" value="InterPro"/>
</dbReference>
<dbReference type="GO" id="GO:0003677">
    <property type="term" value="F:DNA binding"/>
    <property type="evidence" value="ECO:0007669"/>
    <property type="project" value="UniProtKB-KW"/>
</dbReference>
<dbReference type="GO" id="GO:0003917">
    <property type="term" value="F:DNA topoisomerase type I (single strand cut, ATP-independent) activity"/>
    <property type="evidence" value="ECO:0007669"/>
    <property type="project" value="UniProtKB-UniRule"/>
</dbReference>
<dbReference type="GO" id="GO:0008270">
    <property type="term" value="F:zinc ion binding"/>
    <property type="evidence" value="ECO:0007669"/>
    <property type="project" value="UniProtKB-KW"/>
</dbReference>
<dbReference type="GO" id="GO:0006265">
    <property type="term" value="P:DNA topological change"/>
    <property type="evidence" value="ECO:0007669"/>
    <property type="project" value="UniProtKB-UniRule"/>
</dbReference>
<dbReference type="CDD" id="cd00186">
    <property type="entry name" value="TOP1Ac"/>
    <property type="match status" value="1"/>
</dbReference>
<dbReference type="CDD" id="cd03363">
    <property type="entry name" value="TOPRIM_TopoIA_TopoI"/>
    <property type="match status" value="1"/>
</dbReference>
<dbReference type="Gene3D" id="3.40.50.140">
    <property type="match status" value="1"/>
</dbReference>
<dbReference type="Gene3D" id="3.30.65.10">
    <property type="entry name" value="Bacterial Topoisomerase I, domain 1"/>
    <property type="match status" value="2"/>
</dbReference>
<dbReference type="Gene3D" id="1.10.460.10">
    <property type="entry name" value="Topoisomerase I, domain 2"/>
    <property type="match status" value="1"/>
</dbReference>
<dbReference type="Gene3D" id="2.70.20.10">
    <property type="entry name" value="Topoisomerase I, domain 3"/>
    <property type="match status" value="1"/>
</dbReference>
<dbReference type="Gene3D" id="1.10.290.10">
    <property type="entry name" value="Topoisomerase I, domain 4"/>
    <property type="match status" value="1"/>
</dbReference>
<dbReference type="HAMAP" id="MF_00952">
    <property type="entry name" value="Topoisom_1_prok"/>
    <property type="match status" value="1"/>
</dbReference>
<dbReference type="InterPro" id="IPR000380">
    <property type="entry name" value="Topo_IA"/>
</dbReference>
<dbReference type="InterPro" id="IPR003601">
    <property type="entry name" value="Topo_IA_2"/>
</dbReference>
<dbReference type="InterPro" id="IPR023406">
    <property type="entry name" value="Topo_IA_AS"/>
</dbReference>
<dbReference type="InterPro" id="IPR013497">
    <property type="entry name" value="Topo_IA_cen"/>
</dbReference>
<dbReference type="InterPro" id="IPR013824">
    <property type="entry name" value="Topo_IA_cen_sub1"/>
</dbReference>
<dbReference type="InterPro" id="IPR013825">
    <property type="entry name" value="Topo_IA_cen_sub2"/>
</dbReference>
<dbReference type="InterPro" id="IPR013826">
    <property type="entry name" value="Topo_IA_cen_sub3"/>
</dbReference>
<dbReference type="InterPro" id="IPR023405">
    <property type="entry name" value="Topo_IA_core_domain"/>
</dbReference>
<dbReference type="InterPro" id="IPR003602">
    <property type="entry name" value="Topo_IA_DNA-bd_dom"/>
</dbReference>
<dbReference type="InterPro" id="IPR013498">
    <property type="entry name" value="Topo_IA_Znf"/>
</dbReference>
<dbReference type="InterPro" id="IPR005733">
    <property type="entry name" value="TopoI_bac-type"/>
</dbReference>
<dbReference type="InterPro" id="IPR028612">
    <property type="entry name" value="Topoisom_1_IA"/>
</dbReference>
<dbReference type="InterPro" id="IPR006171">
    <property type="entry name" value="TOPRIM_dom"/>
</dbReference>
<dbReference type="InterPro" id="IPR034149">
    <property type="entry name" value="TOPRIM_TopoI"/>
</dbReference>
<dbReference type="NCBIfam" id="TIGR01051">
    <property type="entry name" value="topA_bact"/>
    <property type="match status" value="1"/>
</dbReference>
<dbReference type="PANTHER" id="PTHR42785:SF1">
    <property type="entry name" value="DNA TOPOISOMERASE"/>
    <property type="match status" value="1"/>
</dbReference>
<dbReference type="PANTHER" id="PTHR42785">
    <property type="entry name" value="DNA TOPOISOMERASE, TYPE IA, CORE"/>
    <property type="match status" value="1"/>
</dbReference>
<dbReference type="Pfam" id="PF01131">
    <property type="entry name" value="Topoisom_bac"/>
    <property type="match status" value="1"/>
</dbReference>
<dbReference type="Pfam" id="PF01751">
    <property type="entry name" value="Toprim"/>
    <property type="match status" value="1"/>
</dbReference>
<dbReference type="Pfam" id="PF01396">
    <property type="entry name" value="Zn_ribbon_Top1"/>
    <property type="match status" value="3"/>
</dbReference>
<dbReference type="PRINTS" id="PR00417">
    <property type="entry name" value="PRTPISMRASEI"/>
</dbReference>
<dbReference type="SMART" id="SM00437">
    <property type="entry name" value="TOP1Ac"/>
    <property type="match status" value="1"/>
</dbReference>
<dbReference type="SMART" id="SM00436">
    <property type="entry name" value="TOP1Bc"/>
    <property type="match status" value="1"/>
</dbReference>
<dbReference type="SMART" id="SM00493">
    <property type="entry name" value="TOPRIM"/>
    <property type="match status" value="1"/>
</dbReference>
<dbReference type="SUPFAM" id="SSF56712">
    <property type="entry name" value="Prokaryotic type I DNA topoisomerase"/>
    <property type="match status" value="1"/>
</dbReference>
<dbReference type="PROSITE" id="PS00396">
    <property type="entry name" value="TOPO_IA_1"/>
    <property type="match status" value="1"/>
</dbReference>
<dbReference type="PROSITE" id="PS52039">
    <property type="entry name" value="TOPO_IA_2"/>
    <property type="match status" value="1"/>
</dbReference>
<dbReference type="PROSITE" id="PS50880">
    <property type="entry name" value="TOPRIM"/>
    <property type="match status" value="1"/>
</dbReference>
<reference key="1">
    <citation type="submission" date="2006-08" db="EMBL/GenBank/DDBJ databases">
        <title>Staphylococcus aureus topoisomerase I.</title>
        <authorList>
            <person name="Park J.E."/>
            <person name="Kim H.I."/>
            <person name="Lee J.S."/>
        </authorList>
    </citation>
    <scope>NUCLEOTIDE SEQUENCE [GENOMIC DNA]</scope>
    <source>
        <strain>C66</strain>
    </source>
</reference>
<proteinExistence type="inferred from homology"/>
<gene>
    <name evidence="1" type="primary">topA</name>
</gene>
<protein>
    <recommendedName>
        <fullName evidence="1">DNA topoisomerase 1</fullName>
        <ecNumber evidence="1">5.6.2.1</ecNumber>
    </recommendedName>
    <alternativeName>
        <fullName evidence="1">DNA topoisomerase I</fullName>
    </alternativeName>
    <alternativeName>
        <fullName>Omega-protein</fullName>
    </alternativeName>
    <alternativeName>
        <fullName>Relaxing enzyme</fullName>
    </alternativeName>
    <alternativeName>
        <fullName>Swivelase</fullName>
    </alternativeName>
    <alternativeName>
        <fullName>Untwisting enzyme</fullName>
    </alternativeName>
</protein>
<keyword id="KW-0238">DNA-binding</keyword>
<keyword id="KW-0413">Isomerase</keyword>
<keyword id="KW-0460">Magnesium</keyword>
<keyword id="KW-0479">Metal-binding</keyword>
<keyword id="KW-0677">Repeat</keyword>
<keyword id="KW-0799">Topoisomerase</keyword>
<keyword id="KW-0862">Zinc</keyword>
<keyword id="KW-0863">Zinc-finger</keyword>
<sequence length="689" mass="79100">MADNLVIVESPAKAKTIEKYLGKKYKVIASMGHVRDLPRSQMGVDTEDNYEPKYITIRGKGPVVKELKKHAKKAKNVFLASDPDREGEAIAWHLSKILELEDSKENRVVFNEITKDAVKESFKNPREIEMNLVDAQQARRILDRLVGYNISPVLWKKVKKGLSAGRVQSVALRLVIDRENEIRNFKPEEYWTIEGEFRYKKSKFNAKFLHYKNKPFKLKTKKDVEKITTALDGDQFEITNVTKKEKTRNPANPFTTSTLQQEAARKLNFKARKTMMVAQQLYEGIDLKKQGTIGLITYMRTDSTRISDTAKAEAKQYITNKYGESYTSKRKASGKQGDQDAHEAIRPSSTMRTPDDMKSFLTKDQYRLYKLIWERFVASQMAPAILDTVSLDITQGDIKFRANGQTIKFKGFMTLYVETKDDSDSEKENKLPKLEQGDKVTATQIEPAQHYTQPPPRYTEARLVKTLEELKIGRPSTYAPTIDTIQKRNYVKLESKRFVPTELGEIVHEQVKEYFPEIIDVEFTVNMETLLDKIAEGDITWRKVIDGFFSSFKQDVERAEEEMEKIEIKDEPAGEDCEVCGSPMVIKMGRYGKFMACSNFPDCRNTKAIVKSIGVKCPKCNDGDVVERKSKKNRVFYGCSKYPECDFISWDKPIGRDCPKCNQYLVENKKGKTTQVICSNCDYKEAAQK</sequence>
<name>TOP1_STAAU</name>
<evidence type="ECO:0000255" key="1">
    <source>
        <dbReference type="HAMAP-Rule" id="MF_00952"/>
    </source>
</evidence>
<evidence type="ECO:0000255" key="2">
    <source>
        <dbReference type="PROSITE-ProRule" id="PRU01383"/>
    </source>
</evidence>
<evidence type="ECO:0000256" key="3">
    <source>
        <dbReference type="SAM" id="MobiDB-lite"/>
    </source>
</evidence>
<accession>Q06AK7</accession>
<feature type="chain" id="PRO_0000285934" description="DNA topoisomerase 1">
    <location>
        <begin position="1"/>
        <end position="689"/>
    </location>
</feature>
<feature type="domain" description="Toprim" evidence="1">
    <location>
        <begin position="3"/>
        <end position="113"/>
    </location>
</feature>
<feature type="domain" description="Topo IA-type catalytic" evidence="2">
    <location>
        <begin position="129"/>
        <end position="557"/>
    </location>
</feature>
<feature type="zinc finger region" description="C4-type 1">
    <location>
        <begin position="577"/>
        <end position="603"/>
    </location>
</feature>
<feature type="zinc finger region" description="C4-type 2">
    <location>
        <begin position="617"/>
        <end position="645"/>
    </location>
</feature>
<feature type="zinc finger region" description="C4-type 3">
    <location>
        <begin position="658"/>
        <end position="681"/>
    </location>
</feature>
<feature type="region of interest" description="Interaction with DNA" evidence="1">
    <location>
        <begin position="163"/>
        <end position="168"/>
    </location>
</feature>
<feature type="region of interest" description="Disordered" evidence="3">
    <location>
        <begin position="328"/>
        <end position="357"/>
    </location>
</feature>
<feature type="active site" description="O-(5'-phospho-DNA)-tyrosine intermediate" evidence="2">
    <location>
        <position position="298"/>
    </location>
</feature>
<feature type="binding site" evidence="1">
    <location>
        <position position="9"/>
    </location>
    <ligand>
        <name>Mg(2+)</name>
        <dbReference type="ChEBI" id="CHEBI:18420"/>
        <note>catalytic</note>
    </ligand>
</feature>
<feature type="binding site" evidence="1">
    <location>
        <position position="82"/>
    </location>
    <ligand>
        <name>Mg(2+)</name>
        <dbReference type="ChEBI" id="CHEBI:18420"/>
        <note>catalytic</note>
    </ligand>
</feature>
<feature type="site" description="Interaction with DNA" evidence="1">
    <location>
        <position position="33"/>
    </location>
</feature>
<feature type="site" description="Interaction with DNA" evidence="1">
    <location>
        <position position="139"/>
    </location>
</feature>
<feature type="site" description="Interaction with DNA" evidence="1">
    <location>
        <position position="140"/>
    </location>
</feature>
<feature type="site" description="Interaction with DNA" evidence="1">
    <location>
        <position position="143"/>
    </location>
</feature>
<feature type="site" description="Interaction with DNA" evidence="1">
    <location>
        <position position="148"/>
    </location>
</feature>
<feature type="site" description="Interaction with DNA" evidence="1">
    <location>
        <position position="155"/>
    </location>
</feature>
<feature type="site" description="Interaction with DNA" evidence="1">
    <location>
        <position position="300"/>
    </location>
</feature>
<feature type="site" description="Interaction with DNA" evidence="1">
    <location>
        <position position="488"/>
    </location>
</feature>
<organism>
    <name type="scientific">Staphylococcus aureus</name>
    <dbReference type="NCBI Taxonomy" id="1280"/>
    <lineage>
        <taxon>Bacteria</taxon>
        <taxon>Bacillati</taxon>
        <taxon>Bacillota</taxon>
        <taxon>Bacilli</taxon>
        <taxon>Bacillales</taxon>
        <taxon>Staphylococcaceae</taxon>
        <taxon>Staphylococcus</taxon>
    </lineage>
</organism>